<proteinExistence type="evidence at protein level"/>
<reference key="1">
    <citation type="journal article" date="2001" name="J. Bacteriol.">
        <title>The PPP-family protein phosphatases PrpA and PrpB of Salmonella enterica serovar Typhimurium possess distinct biochemical properties.</title>
        <authorList>
            <person name="Shi L."/>
            <person name="Kehres D.G."/>
            <person name="Maguire M.E."/>
        </authorList>
    </citation>
    <scope>NUCLEOTIDE SEQUENCE [GENOMIC DNA]</scope>
    <scope>CHARACTERIZATION</scope>
</reference>
<reference key="2">
    <citation type="journal article" date="2001" name="Nature">
        <title>Complete genome sequence of Salmonella enterica serovar Typhimurium LT2.</title>
        <authorList>
            <person name="McClelland M."/>
            <person name="Sanderson K.E."/>
            <person name="Spieth J."/>
            <person name="Clifton S.W."/>
            <person name="Latreille P."/>
            <person name="Courtney L."/>
            <person name="Porwollik S."/>
            <person name="Ali J."/>
            <person name="Dante M."/>
            <person name="Du F."/>
            <person name="Hou S."/>
            <person name="Layman D."/>
            <person name="Leonard S."/>
            <person name="Nguyen C."/>
            <person name="Scott K."/>
            <person name="Holmes A."/>
            <person name="Grewal N."/>
            <person name="Mulvaney E."/>
            <person name="Ryan E."/>
            <person name="Sun H."/>
            <person name="Florea L."/>
            <person name="Miller W."/>
            <person name="Stoneking T."/>
            <person name="Nhan M."/>
            <person name="Waterston R."/>
            <person name="Wilson R.K."/>
        </authorList>
    </citation>
    <scope>NUCLEOTIDE SEQUENCE [LARGE SCALE GENOMIC DNA]</scope>
    <source>
        <strain>LT2 / SGSC1412 / ATCC 700720</strain>
    </source>
</reference>
<evidence type="ECO:0000250" key="1"/>
<evidence type="ECO:0000305" key="2"/>
<dbReference type="EC" id="3.1.3.16"/>
<dbReference type="EMBL" id="AY049950">
    <property type="protein sequence ID" value="AAL09831.1"/>
    <property type="status" value="ALT_INIT"/>
    <property type="molecule type" value="Genomic_DNA"/>
</dbReference>
<dbReference type="EMBL" id="AE006468">
    <property type="protein sequence ID" value="AAL20768.1"/>
    <property type="molecule type" value="Genomic_DNA"/>
</dbReference>
<dbReference type="RefSeq" id="NP_460809.1">
    <property type="nucleotide sequence ID" value="NC_003197.2"/>
</dbReference>
<dbReference type="RefSeq" id="WP_000986176.1">
    <property type="nucleotide sequence ID" value="NC_003197.2"/>
</dbReference>
<dbReference type="SMR" id="Q8ZNY9"/>
<dbReference type="STRING" id="99287.STM1853"/>
<dbReference type="PaxDb" id="99287-STM1853"/>
<dbReference type="GeneID" id="1253372"/>
<dbReference type="KEGG" id="stm:STM1853"/>
<dbReference type="PATRIC" id="fig|99287.12.peg.1956"/>
<dbReference type="HOGENOM" id="CLU_023125_1_1_6"/>
<dbReference type="PhylomeDB" id="Q8ZNY9"/>
<dbReference type="BioCyc" id="SENT99287:STM1853-MONOMER"/>
<dbReference type="Proteomes" id="UP000001014">
    <property type="component" value="Chromosome"/>
</dbReference>
<dbReference type="GO" id="GO:0005737">
    <property type="term" value="C:cytoplasm"/>
    <property type="evidence" value="ECO:0000318"/>
    <property type="project" value="GO_Central"/>
</dbReference>
<dbReference type="GO" id="GO:0008803">
    <property type="term" value="F:bis(5'-nucleosyl)-tetraphosphatase (symmetrical) activity"/>
    <property type="evidence" value="ECO:0000318"/>
    <property type="project" value="GO_Central"/>
</dbReference>
<dbReference type="GO" id="GO:0046872">
    <property type="term" value="F:metal ion binding"/>
    <property type="evidence" value="ECO:0007669"/>
    <property type="project" value="UniProtKB-KW"/>
</dbReference>
<dbReference type="GO" id="GO:0016791">
    <property type="term" value="F:phosphatase activity"/>
    <property type="evidence" value="ECO:0000318"/>
    <property type="project" value="GO_Central"/>
</dbReference>
<dbReference type="GO" id="GO:0004722">
    <property type="term" value="F:protein serine/threonine phosphatase activity"/>
    <property type="evidence" value="ECO:0007669"/>
    <property type="project" value="UniProtKB-EC"/>
</dbReference>
<dbReference type="GO" id="GO:0110154">
    <property type="term" value="P:RNA decapping"/>
    <property type="evidence" value="ECO:0000318"/>
    <property type="project" value="GO_Central"/>
</dbReference>
<dbReference type="Gene3D" id="3.60.21.10">
    <property type="match status" value="1"/>
</dbReference>
<dbReference type="InterPro" id="IPR050126">
    <property type="entry name" value="Ap4A_hydrolase"/>
</dbReference>
<dbReference type="InterPro" id="IPR004843">
    <property type="entry name" value="Calcineurin-like_PHP_ApaH"/>
</dbReference>
<dbReference type="InterPro" id="IPR029052">
    <property type="entry name" value="Metallo-depent_PP-like"/>
</dbReference>
<dbReference type="InterPro" id="IPR006186">
    <property type="entry name" value="Ser/Thr-sp_prot-phosphatase"/>
</dbReference>
<dbReference type="NCBIfam" id="NF008516">
    <property type="entry name" value="PRK11439.1"/>
    <property type="match status" value="1"/>
</dbReference>
<dbReference type="PANTHER" id="PTHR42850">
    <property type="entry name" value="METALLOPHOSPHOESTERASE"/>
    <property type="match status" value="1"/>
</dbReference>
<dbReference type="PANTHER" id="PTHR42850:SF10">
    <property type="entry name" value="SERINE_THREONINE-PROTEIN PHOSPHATASE 1"/>
    <property type="match status" value="1"/>
</dbReference>
<dbReference type="Pfam" id="PF00149">
    <property type="entry name" value="Metallophos"/>
    <property type="match status" value="1"/>
</dbReference>
<dbReference type="SUPFAM" id="SSF56300">
    <property type="entry name" value="Metallo-dependent phosphatases"/>
    <property type="match status" value="1"/>
</dbReference>
<dbReference type="PROSITE" id="PS00125">
    <property type="entry name" value="SER_THR_PHOSPHATASE"/>
    <property type="match status" value="1"/>
</dbReference>
<keyword id="KW-0378">Hydrolase</keyword>
<keyword id="KW-0464">Manganese</keyword>
<keyword id="KW-0479">Metal-binding</keyword>
<keyword id="KW-0904">Protein phosphatase</keyword>
<keyword id="KW-1185">Reference proteome</keyword>
<accession>Q8ZNY9</accession>
<accession>Q8VPE2</accession>
<gene>
    <name type="primary">pphA</name>
    <name type="synonym">prpA</name>
    <name type="ordered locus">STM1853</name>
</gene>
<sequence>MMRPEEIYQRIEAKNWRHVWVVGDIHGCFSMLMKRLRECRFDPQQDLLVSVGDLIDRGPDSLGCLALLRESWMTAVRGNHEQMALDARASSQSTLWLMNGGDWFTRLTAEHAAQAEALFILCQRLPWILEVRCRHSTHVIAHADYPASTYQWQKKVDLHQVLWSRERLINKRGGISGADHFWFGHTPLRRRMDFANVHYIDTGAVFGGQLTLARIQ</sequence>
<name>PRP1_SALTY</name>
<comment type="function">
    <text>Can hydrolyze phosphorylated Ser-, Thr- or Tyr-substrates in vitro. The natural substrate is unknown.</text>
</comment>
<comment type="catalytic activity">
    <reaction>
        <text>O-phospho-L-seryl-[protein] + H2O = L-seryl-[protein] + phosphate</text>
        <dbReference type="Rhea" id="RHEA:20629"/>
        <dbReference type="Rhea" id="RHEA-COMP:9863"/>
        <dbReference type="Rhea" id="RHEA-COMP:11604"/>
        <dbReference type="ChEBI" id="CHEBI:15377"/>
        <dbReference type="ChEBI" id="CHEBI:29999"/>
        <dbReference type="ChEBI" id="CHEBI:43474"/>
        <dbReference type="ChEBI" id="CHEBI:83421"/>
        <dbReference type="EC" id="3.1.3.16"/>
    </reaction>
</comment>
<comment type="catalytic activity">
    <reaction>
        <text>O-phospho-L-threonyl-[protein] + H2O = L-threonyl-[protein] + phosphate</text>
        <dbReference type="Rhea" id="RHEA:47004"/>
        <dbReference type="Rhea" id="RHEA-COMP:11060"/>
        <dbReference type="Rhea" id="RHEA-COMP:11605"/>
        <dbReference type="ChEBI" id="CHEBI:15377"/>
        <dbReference type="ChEBI" id="CHEBI:30013"/>
        <dbReference type="ChEBI" id="CHEBI:43474"/>
        <dbReference type="ChEBI" id="CHEBI:61977"/>
        <dbReference type="EC" id="3.1.3.16"/>
    </reaction>
</comment>
<comment type="cofactor">
    <cofactor>
        <name>Mn(2+)</name>
        <dbReference type="ChEBI" id="CHEBI:29035"/>
    </cofactor>
</comment>
<comment type="activity regulation">
    <text>Inhibited by cadmium, copper, zinc when added cobalt when added concomitantly with manganese.</text>
</comment>
<comment type="biophysicochemical properties">
    <phDependence>
        <text>Optimum pH is 6-7.</text>
    </phDependence>
    <temperatureDependence>
        <text>Optimum temperature is 45-55 degrees Celsius. Thermostable.</text>
    </temperatureDependence>
</comment>
<comment type="miscellaneous">
    <text>Neither magnesium nor calcium stimulates activity.</text>
</comment>
<comment type="similarity">
    <text evidence="2">Belongs to the PPP phosphatase family. PP-1 subfamily.</text>
</comment>
<comment type="sequence caution" evidence="2">
    <conflict type="erroneous initiation">
        <sequence resource="EMBL-CDS" id="AAL09831"/>
    </conflict>
</comment>
<organism>
    <name type="scientific">Salmonella typhimurium (strain LT2 / SGSC1412 / ATCC 700720)</name>
    <dbReference type="NCBI Taxonomy" id="99287"/>
    <lineage>
        <taxon>Bacteria</taxon>
        <taxon>Pseudomonadati</taxon>
        <taxon>Pseudomonadota</taxon>
        <taxon>Gammaproteobacteria</taxon>
        <taxon>Enterobacterales</taxon>
        <taxon>Enterobacteriaceae</taxon>
        <taxon>Salmonella</taxon>
    </lineage>
</organism>
<feature type="chain" id="PRO_0000058909" description="Serine/threonine-protein phosphatase 1">
    <location>
        <begin position="1"/>
        <end position="216"/>
    </location>
</feature>
<feature type="active site" description="Proton donor" evidence="1">
    <location>
        <position position="80"/>
    </location>
</feature>
<feature type="binding site" evidence="1">
    <location>
        <position position="24"/>
    </location>
    <ligand>
        <name>Mn(2+)</name>
        <dbReference type="ChEBI" id="CHEBI:29035"/>
        <label>1</label>
    </ligand>
</feature>
<feature type="binding site" evidence="1">
    <location>
        <position position="26"/>
    </location>
    <ligand>
        <name>Mn(2+)</name>
        <dbReference type="ChEBI" id="CHEBI:29035"/>
        <label>1</label>
    </ligand>
</feature>
<feature type="binding site" evidence="1">
    <location>
        <position position="53"/>
    </location>
    <ligand>
        <name>Mn(2+)</name>
        <dbReference type="ChEBI" id="CHEBI:29035"/>
        <label>1</label>
    </ligand>
</feature>
<feature type="binding site" evidence="1">
    <location>
        <position position="53"/>
    </location>
    <ligand>
        <name>Mn(2+)</name>
        <dbReference type="ChEBI" id="CHEBI:29035"/>
        <label>2</label>
    </ligand>
</feature>
<feature type="binding site" evidence="1">
    <location>
        <position position="79"/>
    </location>
    <ligand>
        <name>Mn(2+)</name>
        <dbReference type="ChEBI" id="CHEBI:29035"/>
        <label>2</label>
    </ligand>
</feature>
<feature type="binding site" evidence="1">
    <location>
        <position position="185"/>
    </location>
    <ligand>
        <name>Mn(2+)</name>
        <dbReference type="ChEBI" id="CHEBI:29035"/>
        <label>2</label>
    </ligand>
</feature>
<protein>
    <recommendedName>
        <fullName>Serine/threonine-protein phosphatase 1</fullName>
        <ecNumber>3.1.3.16</ecNumber>
    </recommendedName>
</protein>